<organism>
    <name type="scientific">Mycolicibacterium gilvum (strain PYR-GCK)</name>
    <name type="common">Mycobacterium gilvum (strain PYR-GCK)</name>
    <dbReference type="NCBI Taxonomy" id="350054"/>
    <lineage>
        <taxon>Bacteria</taxon>
        <taxon>Bacillati</taxon>
        <taxon>Actinomycetota</taxon>
        <taxon>Actinomycetes</taxon>
        <taxon>Mycobacteriales</taxon>
        <taxon>Mycobacteriaceae</taxon>
        <taxon>Mycolicibacterium</taxon>
    </lineage>
</organism>
<reference key="1">
    <citation type="submission" date="2007-04" db="EMBL/GenBank/DDBJ databases">
        <title>Complete sequence of chromosome of Mycobacterium gilvum PYR-GCK.</title>
        <authorList>
            <consortium name="US DOE Joint Genome Institute"/>
            <person name="Copeland A."/>
            <person name="Lucas S."/>
            <person name="Lapidus A."/>
            <person name="Barry K."/>
            <person name="Detter J.C."/>
            <person name="Glavina del Rio T."/>
            <person name="Hammon N."/>
            <person name="Israni S."/>
            <person name="Dalin E."/>
            <person name="Tice H."/>
            <person name="Pitluck S."/>
            <person name="Chain P."/>
            <person name="Malfatti S."/>
            <person name="Shin M."/>
            <person name="Vergez L."/>
            <person name="Schmutz J."/>
            <person name="Larimer F."/>
            <person name="Land M."/>
            <person name="Hauser L."/>
            <person name="Kyrpides N."/>
            <person name="Mikhailova N."/>
            <person name="Miller C."/>
            <person name="Richardson P."/>
        </authorList>
    </citation>
    <scope>NUCLEOTIDE SEQUENCE [LARGE SCALE GENOMIC DNA]</scope>
    <source>
        <strain>PYR-GCK</strain>
    </source>
</reference>
<protein>
    <recommendedName>
        <fullName evidence="1">ATP phosphoribosyltransferase</fullName>
        <shortName evidence="1">ATP-PRT</shortName>
        <shortName evidence="1">ATP-PRTase</shortName>
        <ecNumber evidence="1">2.4.2.17</ecNumber>
    </recommendedName>
</protein>
<name>HIS1_MYCGI</name>
<keyword id="KW-0028">Amino-acid biosynthesis</keyword>
<keyword id="KW-0067">ATP-binding</keyword>
<keyword id="KW-0963">Cytoplasm</keyword>
<keyword id="KW-0328">Glycosyltransferase</keyword>
<keyword id="KW-0368">Histidine biosynthesis</keyword>
<keyword id="KW-0460">Magnesium</keyword>
<keyword id="KW-0479">Metal-binding</keyword>
<keyword id="KW-0547">Nucleotide-binding</keyword>
<keyword id="KW-0808">Transferase</keyword>
<proteinExistence type="inferred from homology"/>
<evidence type="ECO:0000255" key="1">
    <source>
        <dbReference type="HAMAP-Rule" id="MF_00079"/>
    </source>
</evidence>
<dbReference type="EC" id="2.4.2.17" evidence="1"/>
<dbReference type="EMBL" id="CP000656">
    <property type="protein sequence ID" value="ABP45534.1"/>
    <property type="molecule type" value="Genomic_DNA"/>
</dbReference>
<dbReference type="SMR" id="A4TB83"/>
<dbReference type="STRING" id="350054.Mflv_3057"/>
<dbReference type="KEGG" id="mgi:Mflv_3057"/>
<dbReference type="eggNOG" id="COG0040">
    <property type="taxonomic scope" value="Bacteria"/>
</dbReference>
<dbReference type="HOGENOM" id="CLU_038115_1_1_11"/>
<dbReference type="UniPathway" id="UPA00031">
    <property type="reaction ID" value="UER00006"/>
</dbReference>
<dbReference type="GO" id="GO:0005737">
    <property type="term" value="C:cytoplasm"/>
    <property type="evidence" value="ECO:0007669"/>
    <property type="project" value="UniProtKB-SubCell"/>
</dbReference>
<dbReference type="GO" id="GO:0005524">
    <property type="term" value="F:ATP binding"/>
    <property type="evidence" value="ECO:0007669"/>
    <property type="project" value="UniProtKB-KW"/>
</dbReference>
<dbReference type="GO" id="GO:0003879">
    <property type="term" value="F:ATP phosphoribosyltransferase activity"/>
    <property type="evidence" value="ECO:0007669"/>
    <property type="project" value="UniProtKB-UniRule"/>
</dbReference>
<dbReference type="GO" id="GO:0000287">
    <property type="term" value="F:magnesium ion binding"/>
    <property type="evidence" value="ECO:0007669"/>
    <property type="project" value="UniProtKB-UniRule"/>
</dbReference>
<dbReference type="GO" id="GO:0000105">
    <property type="term" value="P:L-histidine biosynthetic process"/>
    <property type="evidence" value="ECO:0007669"/>
    <property type="project" value="UniProtKB-UniRule"/>
</dbReference>
<dbReference type="CDD" id="cd13591">
    <property type="entry name" value="PBP2_HisGL1"/>
    <property type="match status" value="1"/>
</dbReference>
<dbReference type="FunFam" id="3.30.70.120:FF:000003">
    <property type="entry name" value="ATP phosphoribosyltransferase"/>
    <property type="match status" value="1"/>
</dbReference>
<dbReference type="FunFam" id="3.40.190.10:FF:000136">
    <property type="entry name" value="ATP phosphoribosyltransferase"/>
    <property type="match status" value="1"/>
</dbReference>
<dbReference type="Gene3D" id="3.30.70.120">
    <property type="match status" value="1"/>
</dbReference>
<dbReference type="Gene3D" id="3.40.190.10">
    <property type="entry name" value="Periplasmic binding protein-like II"/>
    <property type="match status" value="2"/>
</dbReference>
<dbReference type="HAMAP" id="MF_00079">
    <property type="entry name" value="HisG_Long"/>
    <property type="match status" value="1"/>
</dbReference>
<dbReference type="InterPro" id="IPR020621">
    <property type="entry name" value="ATP-PRT_HisG_long"/>
</dbReference>
<dbReference type="InterPro" id="IPR013820">
    <property type="entry name" value="ATP_PRibTrfase_cat"/>
</dbReference>
<dbReference type="InterPro" id="IPR018198">
    <property type="entry name" value="ATP_PRibTrfase_CS"/>
</dbReference>
<dbReference type="InterPro" id="IPR001348">
    <property type="entry name" value="ATP_PRibTrfase_HisG"/>
</dbReference>
<dbReference type="InterPro" id="IPR013115">
    <property type="entry name" value="HisG_C"/>
</dbReference>
<dbReference type="InterPro" id="IPR011322">
    <property type="entry name" value="N-reg_PII-like_a/b"/>
</dbReference>
<dbReference type="InterPro" id="IPR015867">
    <property type="entry name" value="N-reg_PII/ATP_PRibTrfase_C"/>
</dbReference>
<dbReference type="NCBIfam" id="TIGR00070">
    <property type="entry name" value="hisG"/>
    <property type="match status" value="1"/>
</dbReference>
<dbReference type="NCBIfam" id="TIGR03455">
    <property type="entry name" value="HisG_C-term"/>
    <property type="match status" value="1"/>
</dbReference>
<dbReference type="PANTHER" id="PTHR21403:SF8">
    <property type="entry name" value="ATP PHOSPHORIBOSYLTRANSFERASE"/>
    <property type="match status" value="1"/>
</dbReference>
<dbReference type="PANTHER" id="PTHR21403">
    <property type="entry name" value="ATP PHOSPHORIBOSYLTRANSFERASE ATP-PRTASE"/>
    <property type="match status" value="1"/>
</dbReference>
<dbReference type="Pfam" id="PF01634">
    <property type="entry name" value="HisG"/>
    <property type="match status" value="1"/>
</dbReference>
<dbReference type="Pfam" id="PF08029">
    <property type="entry name" value="HisG_C"/>
    <property type="match status" value="1"/>
</dbReference>
<dbReference type="SUPFAM" id="SSF54913">
    <property type="entry name" value="GlnB-like"/>
    <property type="match status" value="1"/>
</dbReference>
<dbReference type="SUPFAM" id="SSF53850">
    <property type="entry name" value="Periplasmic binding protein-like II"/>
    <property type="match status" value="1"/>
</dbReference>
<dbReference type="PROSITE" id="PS01316">
    <property type="entry name" value="ATP_P_PHORIBOSYLTR"/>
    <property type="match status" value="1"/>
</dbReference>
<accession>A4TB83</accession>
<feature type="chain" id="PRO_1000075262" description="ATP phosphoribosyltransferase">
    <location>
        <begin position="1"/>
        <end position="281"/>
    </location>
</feature>
<sequence>MLRVAVPNKGALSESASEILSEAGYRRRSDPKDLTVVDPANNVEFFFLRPKDIAIYVGSGELDLGITGRDLAADADAPVRERLALGFGSSTFRYAAPAGQDWQIADLAGRRIATAYPNLVRKDLADKGIDATVIRLDGAVEISIQLGVADVIADIVGSGRTLGLHNLVAFGESLCDSEAILIERADSDPDPARDQLAARVQGVVFGQQYLMLDYDCPRTVLDKATEVTPGLESPTIAPLADPAWVAVRALVPRRDVNAIMDELAAIGAKAILASDIRFCRF</sequence>
<gene>
    <name evidence="1" type="primary">hisG</name>
    <name type="ordered locus">Mflv_3057</name>
</gene>
<comment type="function">
    <text evidence="1">Catalyzes the condensation of ATP and 5-phosphoribose 1-diphosphate to form N'-(5'-phosphoribosyl)-ATP (PR-ATP). Has a crucial role in the pathway because the rate of histidine biosynthesis seems to be controlled primarily by regulation of HisG enzymatic activity.</text>
</comment>
<comment type="catalytic activity">
    <reaction evidence="1">
        <text>1-(5-phospho-beta-D-ribosyl)-ATP + diphosphate = 5-phospho-alpha-D-ribose 1-diphosphate + ATP</text>
        <dbReference type="Rhea" id="RHEA:18473"/>
        <dbReference type="ChEBI" id="CHEBI:30616"/>
        <dbReference type="ChEBI" id="CHEBI:33019"/>
        <dbReference type="ChEBI" id="CHEBI:58017"/>
        <dbReference type="ChEBI" id="CHEBI:73183"/>
        <dbReference type="EC" id="2.4.2.17"/>
    </reaction>
</comment>
<comment type="cofactor">
    <cofactor evidence="1">
        <name>Mg(2+)</name>
        <dbReference type="ChEBI" id="CHEBI:18420"/>
    </cofactor>
</comment>
<comment type="activity regulation">
    <text evidence="1">Feedback inhibited by histidine.</text>
</comment>
<comment type="pathway">
    <text evidence="1">Amino-acid biosynthesis; L-histidine biosynthesis; L-histidine from 5-phospho-alpha-D-ribose 1-diphosphate: step 1/9.</text>
</comment>
<comment type="subunit">
    <text evidence="1">Equilibrium between an active dimeric form, an inactive hexameric form and higher aggregates. Interconversion between the various forms is largely reversible and is influenced by the natural substrates and inhibitors of the enzyme.</text>
</comment>
<comment type="subcellular location">
    <subcellularLocation>
        <location evidence="1">Cytoplasm</location>
    </subcellularLocation>
</comment>
<comment type="similarity">
    <text evidence="1">Belongs to the ATP phosphoribosyltransferase family. Long subfamily.</text>
</comment>